<feature type="chain" id="PRO_0000264204" description="Transcriptional repressor NrdR">
    <location>
        <begin position="1"/>
        <end position="160"/>
    </location>
</feature>
<feature type="domain" description="ATP-cone" evidence="1">
    <location>
        <begin position="49"/>
        <end position="139"/>
    </location>
</feature>
<feature type="zinc finger region" evidence="1">
    <location>
        <begin position="3"/>
        <end position="34"/>
    </location>
</feature>
<feature type="region of interest" description="Disordered" evidence="2">
    <location>
        <begin position="1"/>
        <end position="20"/>
    </location>
</feature>
<feature type="compositionally biased region" description="Polar residues" evidence="2">
    <location>
        <begin position="1"/>
        <end position="11"/>
    </location>
</feature>
<name>NRDR_RHOP2</name>
<accession>Q2IWS3</accession>
<proteinExistence type="inferred from homology"/>
<keyword id="KW-0067">ATP-binding</keyword>
<keyword id="KW-0238">DNA-binding</keyword>
<keyword id="KW-0479">Metal-binding</keyword>
<keyword id="KW-0547">Nucleotide-binding</keyword>
<keyword id="KW-1185">Reference proteome</keyword>
<keyword id="KW-0678">Repressor</keyword>
<keyword id="KW-0804">Transcription</keyword>
<keyword id="KW-0805">Transcription regulation</keyword>
<keyword id="KW-0862">Zinc</keyword>
<keyword id="KW-0863">Zinc-finger</keyword>
<protein>
    <recommendedName>
        <fullName evidence="1">Transcriptional repressor NrdR</fullName>
    </recommendedName>
</protein>
<dbReference type="EMBL" id="CP000250">
    <property type="protein sequence ID" value="ABD07337.1"/>
    <property type="molecule type" value="Genomic_DNA"/>
</dbReference>
<dbReference type="RefSeq" id="WP_011441522.1">
    <property type="nucleotide sequence ID" value="NC_007778.1"/>
</dbReference>
<dbReference type="SMR" id="Q2IWS3"/>
<dbReference type="STRING" id="316058.RPB_2635"/>
<dbReference type="KEGG" id="rpb:RPB_2635"/>
<dbReference type="eggNOG" id="COG1327">
    <property type="taxonomic scope" value="Bacteria"/>
</dbReference>
<dbReference type="HOGENOM" id="CLU_108412_0_1_5"/>
<dbReference type="OrthoDB" id="9807461at2"/>
<dbReference type="Proteomes" id="UP000008809">
    <property type="component" value="Chromosome"/>
</dbReference>
<dbReference type="GO" id="GO:0005524">
    <property type="term" value="F:ATP binding"/>
    <property type="evidence" value="ECO:0007669"/>
    <property type="project" value="UniProtKB-KW"/>
</dbReference>
<dbReference type="GO" id="GO:0003677">
    <property type="term" value="F:DNA binding"/>
    <property type="evidence" value="ECO:0007669"/>
    <property type="project" value="UniProtKB-KW"/>
</dbReference>
<dbReference type="GO" id="GO:0008270">
    <property type="term" value="F:zinc ion binding"/>
    <property type="evidence" value="ECO:0007669"/>
    <property type="project" value="UniProtKB-UniRule"/>
</dbReference>
<dbReference type="GO" id="GO:0045892">
    <property type="term" value="P:negative regulation of DNA-templated transcription"/>
    <property type="evidence" value="ECO:0007669"/>
    <property type="project" value="UniProtKB-UniRule"/>
</dbReference>
<dbReference type="HAMAP" id="MF_00440">
    <property type="entry name" value="NrdR"/>
    <property type="match status" value="1"/>
</dbReference>
<dbReference type="InterPro" id="IPR005144">
    <property type="entry name" value="ATP-cone_dom"/>
</dbReference>
<dbReference type="InterPro" id="IPR055173">
    <property type="entry name" value="NrdR-like_N"/>
</dbReference>
<dbReference type="InterPro" id="IPR003796">
    <property type="entry name" value="RNR_NrdR-like"/>
</dbReference>
<dbReference type="NCBIfam" id="TIGR00244">
    <property type="entry name" value="transcriptional regulator NrdR"/>
    <property type="match status" value="1"/>
</dbReference>
<dbReference type="PANTHER" id="PTHR30455">
    <property type="entry name" value="TRANSCRIPTIONAL REPRESSOR NRDR"/>
    <property type="match status" value="1"/>
</dbReference>
<dbReference type="PANTHER" id="PTHR30455:SF2">
    <property type="entry name" value="TRANSCRIPTIONAL REPRESSOR NRDR"/>
    <property type="match status" value="1"/>
</dbReference>
<dbReference type="Pfam" id="PF03477">
    <property type="entry name" value="ATP-cone"/>
    <property type="match status" value="1"/>
</dbReference>
<dbReference type="Pfam" id="PF22811">
    <property type="entry name" value="Zn_ribbon_NrdR"/>
    <property type="match status" value="1"/>
</dbReference>
<dbReference type="PROSITE" id="PS51161">
    <property type="entry name" value="ATP_CONE"/>
    <property type="match status" value="1"/>
</dbReference>
<sequence>MRCPNCNSLDTQVKDSRPTEDSSVIRRRRVCIACNFRFTTFERVQLRELTVIKRNGRRVPFDRDKLVRSLQISLRKRPVEPERVEQMVSAIVRELESGGEADISSETIGEIVMDHLRKLDDVAYVRFASVYRNFREAKDFEAVLGELSGEEEARPALVRK</sequence>
<reference key="1">
    <citation type="submission" date="2006-01" db="EMBL/GenBank/DDBJ databases">
        <title>Complete sequence of Rhodopseudomonas palustris HaA2.</title>
        <authorList>
            <consortium name="US DOE Joint Genome Institute"/>
            <person name="Copeland A."/>
            <person name="Lucas S."/>
            <person name="Lapidus A."/>
            <person name="Barry K."/>
            <person name="Detter J.C."/>
            <person name="Glavina T."/>
            <person name="Hammon N."/>
            <person name="Israni S."/>
            <person name="Pitluck S."/>
            <person name="Chain P."/>
            <person name="Malfatti S."/>
            <person name="Shin M."/>
            <person name="Vergez L."/>
            <person name="Schmutz J."/>
            <person name="Larimer F."/>
            <person name="Land M."/>
            <person name="Hauser L."/>
            <person name="Pelletier D.A."/>
            <person name="Kyrpides N."/>
            <person name="Anderson I."/>
            <person name="Oda Y."/>
            <person name="Harwood C.S."/>
            <person name="Richardson P."/>
        </authorList>
    </citation>
    <scope>NUCLEOTIDE SEQUENCE [LARGE SCALE GENOMIC DNA]</scope>
    <source>
        <strain>HaA2</strain>
    </source>
</reference>
<comment type="function">
    <text evidence="1">Negatively regulates transcription of bacterial ribonucleotide reductase nrd genes and operons by binding to NrdR-boxes.</text>
</comment>
<comment type="cofactor">
    <cofactor evidence="1">
        <name>Zn(2+)</name>
        <dbReference type="ChEBI" id="CHEBI:29105"/>
    </cofactor>
    <text evidence="1">Binds 1 zinc ion.</text>
</comment>
<comment type="similarity">
    <text evidence="1">Belongs to the NrdR family.</text>
</comment>
<organism>
    <name type="scientific">Rhodopseudomonas palustris (strain HaA2)</name>
    <dbReference type="NCBI Taxonomy" id="316058"/>
    <lineage>
        <taxon>Bacteria</taxon>
        <taxon>Pseudomonadati</taxon>
        <taxon>Pseudomonadota</taxon>
        <taxon>Alphaproteobacteria</taxon>
        <taxon>Hyphomicrobiales</taxon>
        <taxon>Nitrobacteraceae</taxon>
        <taxon>Rhodopseudomonas</taxon>
    </lineage>
</organism>
<evidence type="ECO:0000255" key="1">
    <source>
        <dbReference type="HAMAP-Rule" id="MF_00440"/>
    </source>
</evidence>
<evidence type="ECO:0000256" key="2">
    <source>
        <dbReference type="SAM" id="MobiDB-lite"/>
    </source>
</evidence>
<gene>
    <name evidence="1" type="primary">nrdR</name>
    <name type="ordered locus">RPB_2635</name>
</gene>